<evidence type="ECO:0000255" key="1">
    <source>
        <dbReference type="HAMAP-Rule" id="MF_00109"/>
    </source>
</evidence>
<gene>
    <name evidence="1" type="primary">aroK</name>
    <name type="ordered locus">SYO3AOP1_0528</name>
</gene>
<protein>
    <recommendedName>
        <fullName evidence="1">Shikimate kinase</fullName>
        <shortName evidence="1">SK</shortName>
        <ecNumber evidence="1">2.7.1.71</ecNumber>
    </recommendedName>
</protein>
<proteinExistence type="inferred from homology"/>
<sequence length="166" mass="19078">MKNIYLVGFMGSGKSTVGKILAEKLNMKFVDIDKLIEEKEGMKIKDIFEQKGESYFRELERKQIEAIVNQEGLVVSTGGGLGANLNNMNLMKKNGDVVWLDVSLNTVLDRLKNDQDRPLLKQPIEKIKQLFEERKNVYRLANIRINADKKTPSQIVEEILTKIKRR</sequence>
<keyword id="KW-0028">Amino-acid biosynthesis</keyword>
<keyword id="KW-0057">Aromatic amino acid biosynthesis</keyword>
<keyword id="KW-0067">ATP-binding</keyword>
<keyword id="KW-0963">Cytoplasm</keyword>
<keyword id="KW-0418">Kinase</keyword>
<keyword id="KW-0460">Magnesium</keyword>
<keyword id="KW-0479">Metal-binding</keyword>
<keyword id="KW-0547">Nucleotide-binding</keyword>
<keyword id="KW-0808">Transferase</keyword>
<feature type="chain" id="PRO_1000119065" description="Shikimate kinase">
    <location>
        <begin position="1"/>
        <end position="166"/>
    </location>
</feature>
<feature type="binding site" evidence="1">
    <location>
        <begin position="11"/>
        <end position="16"/>
    </location>
    <ligand>
        <name>ATP</name>
        <dbReference type="ChEBI" id="CHEBI:30616"/>
    </ligand>
</feature>
<feature type="binding site" evidence="1">
    <location>
        <position position="15"/>
    </location>
    <ligand>
        <name>Mg(2+)</name>
        <dbReference type="ChEBI" id="CHEBI:18420"/>
    </ligand>
</feature>
<feature type="binding site" evidence="1">
    <location>
        <position position="33"/>
    </location>
    <ligand>
        <name>substrate</name>
    </ligand>
</feature>
<feature type="binding site" evidence="1">
    <location>
        <position position="57"/>
    </location>
    <ligand>
        <name>substrate</name>
    </ligand>
</feature>
<feature type="binding site" evidence="1">
    <location>
        <position position="79"/>
    </location>
    <ligand>
        <name>substrate</name>
    </ligand>
</feature>
<feature type="binding site" evidence="1">
    <location>
        <position position="117"/>
    </location>
    <ligand>
        <name>ATP</name>
        <dbReference type="ChEBI" id="CHEBI:30616"/>
    </ligand>
</feature>
<feature type="binding site" evidence="1">
    <location>
        <position position="134"/>
    </location>
    <ligand>
        <name>substrate</name>
    </ligand>
</feature>
<reference key="1">
    <citation type="journal article" date="2009" name="J. Bacteriol.">
        <title>Complete and draft genome sequences of six members of the Aquificales.</title>
        <authorList>
            <person name="Reysenbach A.-L."/>
            <person name="Hamamura N."/>
            <person name="Podar M."/>
            <person name="Griffiths E."/>
            <person name="Ferreira S."/>
            <person name="Hochstein R."/>
            <person name="Heidelberg J."/>
            <person name="Johnson J."/>
            <person name="Mead D."/>
            <person name="Pohorille A."/>
            <person name="Sarmiento M."/>
            <person name="Schweighofer K."/>
            <person name="Seshadri R."/>
            <person name="Voytek M.A."/>
        </authorList>
    </citation>
    <scope>NUCLEOTIDE SEQUENCE [LARGE SCALE GENOMIC DNA]</scope>
    <source>
        <strain>YO3AOP1</strain>
    </source>
</reference>
<name>AROK_SULSY</name>
<comment type="function">
    <text evidence="1">Catalyzes the specific phosphorylation of the 3-hydroxyl group of shikimic acid using ATP as a cosubstrate.</text>
</comment>
<comment type="catalytic activity">
    <reaction evidence="1">
        <text>shikimate + ATP = 3-phosphoshikimate + ADP + H(+)</text>
        <dbReference type="Rhea" id="RHEA:13121"/>
        <dbReference type="ChEBI" id="CHEBI:15378"/>
        <dbReference type="ChEBI" id="CHEBI:30616"/>
        <dbReference type="ChEBI" id="CHEBI:36208"/>
        <dbReference type="ChEBI" id="CHEBI:145989"/>
        <dbReference type="ChEBI" id="CHEBI:456216"/>
        <dbReference type="EC" id="2.7.1.71"/>
    </reaction>
</comment>
<comment type="cofactor">
    <cofactor evidence="1">
        <name>Mg(2+)</name>
        <dbReference type="ChEBI" id="CHEBI:18420"/>
    </cofactor>
    <text evidence="1">Binds 1 Mg(2+) ion per subunit.</text>
</comment>
<comment type="pathway">
    <text evidence="1">Metabolic intermediate biosynthesis; chorismate biosynthesis; chorismate from D-erythrose 4-phosphate and phosphoenolpyruvate: step 5/7.</text>
</comment>
<comment type="subunit">
    <text evidence="1">Monomer.</text>
</comment>
<comment type="subcellular location">
    <subcellularLocation>
        <location evidence="1">Cytoplasm</location>
    </subcellularLocation>
</comment>
<comment type="similarity">
    <text evidence="1">Belongs to the shikimate kinase family.</text>
</comment>
<accession>B2V895</accession>
<dbReference type="EC" id="2.7.1.71" evidence="1"/>
<dbReference type="EMBL" id="CP001080">
    <property type="protein sequence ID" value="ACD66168.1"/>
    <property type="molecule type" value="Genomic_DNA"/>
</dbReference>
<dbReference type="RefSeq" id="WP_012459249.1">
    <property type="nucleotide sequence ID" value="NC_010730.1"/>
</dbReference>
<dbReference type="SMR" id="B2V895"/>
<dbReference type="STRING" id="436114.SYO3AOP1_0528"/>
<dbReference type="KEGG" id="sul:SYO3AOP1_0528"/>
<dbReference type="eggNOG" id="COG0703">
    <property type="taxonomic scope" value="Bacteria"/>
</dbReference>
<dbReference type="HOGENOM" id="CLU_057607_4_3_0"/>
<dbReference type="UniPathway" id="UPA00053">
    <property type="reaction ID" value="UER00088"/>
</dbReference>
<dbReference type="GO" id="GO:0005829">
    <property type="term" value="C:cytosol"/>
    <property type="evidence" value="ECO:0007669"/>
    <property type="project" value="TreeGrafter"/>
</dbReference>
<dbReference type="GO" id="GO:0005524">
    <property type="term" value="F:ATP binding"/>
    <property type="evidence" value="ECO:0007669"/>
    <property type="project" value="UniProtKB-UniRule"/>
</dbReference>
<dbReference type="GO" id="GO:0000287">
    <property type="term" value="F:magnesium ion binding"/>
    <property type="evidence" value="ECO:0007669"/>
    <property type="project" value="UniProtKB-UniRule"/>
</dbReference>
<dbReference type="GO" id="GO:0004765">
    <property type="term" value="F:shikimate kinase activity"/>
    <property type="evidence" value="ECO:0007669"/>
    <property type="project" value="UniProtKB-UniRule"/>
</dbReference>
<dbReference type="GO" id="GO:0008652">
    <property type="term" value="P:amino acid biosynthetic process"/>
    <property type="evidence" value="ECO:0007669"/>
    <property type="project" value="UniProtKB-KW"/>
</dbReference>
<dbReference type="GO" id="GO:0009073">
    <property type="term" value="P:aromatic amino acid family biosynthetic process"/>
    <property type="evidence" value="ECO:0007669"/>
    <property type="project" value="UniProtKB-KW"/>
</dbReference>
<dbReference type="GO" id="GO:0009423">
    <property type="term" value="P:chorismate biosynthetic process"/>
    <property type="evidence" value="ECO:0007669"/>
    <property type="project" value="UniProtKB-UniRule"/>
</dbReference>
<dbReference type="CDD" id="cd00464">
    <property type="entry name" value="SK"/>
    <property type="match status" value="1"/>
</dbReference>
<dbReference type="Gene3D" id="3.40.50.300">
    <property type="entry name" value="P-loop containing nucleotide triphosphate hydrolases"/>
    <property type="match status" value="1"/>
</dbReference>
<dbReference type="HAMAP" id="MF_00109">
    <property type="entry name" value="Shikimate_kinase"/>
    <property type="match status" value="1"/>
</dbReference>
<dbReference type="InterPro" id="IPR027417">
    <property type="entry name" value="P-loop_NTPase"/>
</dbReference>
<dbReference type="InterPro" id="IPR031322">
    <property type="entry name" value="Shikimate/glucono_kinase"/>
</dbReference>
<dbReference type="InterPro" id="IPR000623">
    <property type="entry name" value="Shikimate_kinase/TSH1"/>
</dbReference>
<dbReference type="InterPro" id="IPR023000">
    <property type="entry name" value="Shikimate_kinase_CS"/>
</dbReference>
<dbReference type="PANTHER" id="PTHR21087">
    <property type="entry name" value="SHIKIMATE KINASE"/>
    <property type="match status" value="1"/>
</dbReference>
<dbReference type="PANTHER" id="PTHR21087:SF16">
    <property type="entry name" value="SHIKIMATE KINASE 1, CHLOROPLASTIC"/>
    <property type="match status" value="1"/>
</dbReference>
<dbReference type="Pfam" id="PF01202">
    <property type="entry name" value="SKI"/>
    <property type="match status" value="1"/>
</dbReference>
<dbReference type="PRINTS" id="PR01100">
    <property type="entry name" value="SHIKIMTKNASE"/>
</dbReference>
<dbReference type="SUPFAM" id="SSF52540">
    <property type="entry name" value="P-loop containing nucleoside triphosphate hydrolases"/>
    <property type="match status" value="1"/>
</dbReference>
<dbReference type="PROSITE" id="PS01128">
    <property type="entry name" value="SHIKIMATE_KINASE"/>
    <property type="match status" value="1"/>
</dbReference>
<organism>
    <name type="scientific">Sulfurihydrogenibium sp. (strain YO3AOP1)</name>
    <dbReference type="NCBI Taxonomy" id="436114"/>
    <lineage>
        <taxon>Bacteria</taxon>
        <taxon>Pseudomonadati</taxon>
        <taxon>Aquificota</taxon>
        <taxon>Aquificia</taxon>
        <taxon>Aquificales</taxon>
        <taxon>Hydrogenothermaceae</taxon>
        <taxon>Sulfurihydrogenibium</taxon>
    </lineage>
</organism>